<organism>
    <name type="scientific">Olimarabidopsis pumila</name>
    <name type="common">Dwarf rocket</name>
    <name type="synonym">Arabidopsis griffithiana</name>
    <dbReference type="NCBI Taxonomy" id="74718"/>
    <lineage>
        <taxon>Eukaryota</taxon>
        <taxon>Viridiplantae</taxon>
        <taxon>Streptophyta</taxon>
        <taxon>Embryophyta</taxon>
        <taxon>Tracheophyta</taxon>
        <taxon>Spermatophyta</taxon>
        <taxon>Magnoliopsida</taxon>
        <taxon>eudicotyledons</taxon>
        <taxon>Gunneridae</taxon>
        <taxon>Pentapetalae</taxon>
        <taxon>rosids</taxon>
        <taxon>malvids</taxon>
        <taxon>Brassicales</taxon>
        <taxon>Brassicaceae</taxon>
        <taxon>Alyssopsideae</taxon>
        <taxon>Olimarabidopsis</taxon>
    </lineage>
</organism>
<name>CYF_OLIPU</name>
<evidence type="ECO:0000250" key="1"/>
<evidence type="ECO:0000255" key="2">
    <source>
        <dbReference type="HAMAP-Rule" id="MF_00610"/>
    </source>
</evidence>
<feature type="signal peptide" evidence="2">
    <location>
        <begin position="1"/>
        <end position="35"/>
    </location>
</feature>
<feature type="chain" id="PRO_0000342079" description="Cytochrome f">
    <location>
        <begin position="36"/>
        <end position="320"/>
    </location>
</feature>
<feature type="transmembrane region" description="Helical" evidence="2">
    <location>
        <begin position="286"/>
        <end position="306"/>
    </location>
</feature>
<feature type="binding site" description="axial binding residue" evidence="2">
    <location>
        <position position="36"/>
    </location>
    <ligand>
        <name>heme</name>
        <dbReference type="ChEBI" id="CHEBI:30413"/>
    </ligand>
    <ligandPart>
        <name>Fe</name>
        <dbReference type="ChEBI" id="CHEBI:18248"/>
    </ligandPart>
</feature>
<feature type="binding site" description="covalent" evidence="2">
    <location>
        <position position="56"/>
    </location>
    <ligand>
        <name>heme</name>
        <dbReference type="ChEBI" id="CHEBI:30413"/>
    </ligand>
</feature>
<feature type="binding site" description="covalent" evidence="2">
    <location>
        <position position="59"/>
    </location>
    <ligand>
        <name>heme</name>
        <dbReference type="ChEBI" id="CHEBI:30413"/>
    </ligand>
</feature>
<feature type="binding site" description="axial binding residue" evidence="2">
    <location>
        <position position="60"/>
    </location>
    <ligand>
        <name>heme</name>
        <dbReference type="ChEBI" id="CHEBI:30413"/>
    </ligand>
    <ligandPart>
        <name>Fe</name>
        <dbReference type="ChEBI" id="CHEBI:18248"/>
    </ligandPart>
</feature>
<gene>
    <name evidence="2" type="primary">petA</name>
</gene>
<proteinExistence type="inferred from homology"/>
<comment type="function">
    <text evidence="2">Component of the cytochrome b6-f complex, which mediates electron transfer between photosystem II (PSII) and photosystem I (PSI), cyclic electron flow around PSI, and state transitions.</text>
</comment>
<comment type="cofactor">
    <cofactor evidence="2">
        <name>heme</name>
        <dbReference type="ChEBI" id="CHEBI:30413"/>
    </cofactor>
    <text evidence="2">Binds 1 heme group covalently.</text>
</comment>
<comment type="subunit">
    <text evidence="1">The 4 large subunits of the cytochrome b6-f complex are cytochrome b6, subunit IV (17 kDa polypeptide, petD), cytochrome f and the Rieske protein, while the 4 small subunits are PetG, PetL, PetM and PetN. The complex functions as a dimer (By similarity).</text>
</comment>
<comment type="subcellular location">
    <subcellularLocation>
        <location evidence="2">Plastid</location>
        <location evidence="2">Chloroplast thylakoid membrane</location>
        <topology evidence="2">Single-pass membrane protein</topology>
    </subcellularLocation>
</comment>
<comment type="similarity">
    <text evidence="2">Belongs to the cytochrome f family.</text>
</comment>
<dbReference type="EMBL" id="AP009368">
    <property type="protein sequence ID" value="BAF49952.1"/>
    <property type="molecule type" value="Genomic_DNA"/>
</dbReference>
<dbReference type="RefSeq" id="YP_001123128.1">
    <property type="nucleotide sequence ID" value="NC_009267.1"/>
</dbReference>
<dbReference type="BMRB" id="A4QJZ7"/>
<dbReference type="SMR" id="A4QJZ7"/>
<dbReference type="GeneID" id="4962364"/>
<dbReference type="GO" id="GO:0009535">
    <property type="term" value="C:chloroplast thylakoid membrane"/>
    <property type="evidence" value="ECO:0007669"/>
    <property type="project" value="UniProtKB-SubCell"/>
</dbReference>
<dbReference type="GO" id="GO:0009055">
    <property type="term" value="F:electron transfer activity"/>
    <property type="evidence" value="ECO:0007669"/>
    <property type="project" value="UniProtKB-UniRule"/>
</dbReference>
<dbReference type="GO" id="GO:0020037">
    <property type="term" value="F:heme binding"/>
    <property type="evidence" value="ECO:0007669"/>
    <property type="project" value="InterPro"/>
</dbReference>
<dbReference type="GO" id="GO:0005506">
    <property type="term" value="F:iron ion binding"/>
    <property type="evidence" value="ECO:0007669"/>
    <property type="project" value="InterPro"/>
</dbReference>
<dbReference type="GO" id="GO:0015979">
    <property type="term" value="P:photosynthesis"/>
    <property type="evidence" value="ECO:0007669"/>
    <property type="project" value="UniProtKB-UniRule"/>
</dbReference>
<dbReference type="FunFam" id="1.20.5.700:FF:000001">
    <property type="entry name" value="Cytochrome f"/>
    <property type="match status" value="1"/>
</dbReference>
<dbReference type="FunFam" id="2.40.50.100:FF:000007">
    <property type="entry name" value="Cytochrome f"/>
    <property type="match status" value="1"/>
</dbReference>
<dbReference type="FunFam" id="2.60.40.830:FF:000001">
    <property type="entry name" value="Cytochrome f"/>
    <property type="match status" value="1"/>
</dbReference>
<dbReference type="Gene3D" id="2.40.50.100">
    <property type="match status" value="1"/>
</dbReference>
<dbReference type="Gene3D" id="2.60.40.830">
    <property type="entry name" value="Cytochrome f large domain"/>
    <property type="match status" value="1"/>
</dbReference>
<dbReference type="Gene3D" id="1.20.5.700">
    <property type="entry name" value="Single helix bin"/>
    <property type="match status" value="1"/>
</dbReference>
<dbReference type="HAMAP" id="MF_00610">
    <property type="entry name" value="Cytb6_f_cytF"/>
    <property type="match status" value="1"/>
</dbReference>
<dbReference type="InterPro" id="IPR024058">
    <property type="entry name" value="Cyt-f_TM"/>
</dbReference>
<dbReference type="InterPro" id="IPR002325">
    <property type="entry name" value="Cyt_f"/>
</dbReference>
<dbReference type="InterPro" id="IPR024094">
    <property type="entry name" value="Cyt_f_lg_dom"/>
</dbReference>
<dbReference type="InterPro" id="IPR036826">
    <property type="entry name" value="Cyt_f_lg_dom_sf"/>
</dbReference>
<dbReference type="InterPro" id="IPR011054">
    <property type="entry name" value="Rudment_hybrid_motif"/>
</dbReference>
<dbReference type="PANTHER" id="PTHR33288">
    <property type="match status" value="1"/>
</dbReference>
<dbReference type="PANTHER" id="PTHR33288:SF10">
    <property type="entry name" value="CYTOCHROME F"/>
    <property type="match status" value="1"/>
</dbReference>
<dbReference type="Pfam" id="PF01333">
    <property type="entry name" value="Apocytochr_F_C"/>
    <property type="match status" value="1"/>
</dbReference>
<dbReference type="Pfam" id="PF16639">
    <property type="entry name" value="Apocytochr_F_N"/>
    <property type="match status" value="1"/>
</dbReference>
<dbReference type="PRINTS" id="PR00610">
    <property type="entry name" value="CYTOCHROMEF"/>
</dbReference>
<dbReference type="SUPFAM" id="SSF103431">
    <property type="entry name" value="Cytochrome f subunit of the cytochrome b6f complex, transmembrane anchor"/>
    <property type="match status" value="1"/>
</dbReference>
<dbReference type="SUPFAM" id="SSF49441">
    <property type="entry name" value="Cytochrome f, large domain"/>
    <property type="match status" value="1"/>
</dbReference>
<dbReference type="SUPFAM" id="SSF51246">
    <property type="entry name" value="Rudiment single hybrid motif"/>
    <property type="match status" value="1"/>
</dbReference>
<dbReference type="PROSITE" id="PS51010">
    <property type="entry name" value="CYTF"/>
    <property type="match status" value="1"/>
</dbReference>
<keyword id="KW-0150">Chloroplast</keyword>
<keyword id="KW-0249">Electron transport</keyword>
<keyword id="KW-0349">Heme</keyword>
<keyword id="KW-0408">Iron</keyword>
<keyword id="KW-0472">Membrane</keyword>
<keyword id="KW-0479">Metal-binding</keyword>
<keyword id="KW-0602">Photosynthesis</keyword>
<keyword id="KW-0934">Plastid</keyword>
<keyword id="KW-0732">Signal</keyword>
<keyword id="KW-0793">Thylakoid</keyword>
<keyword id="KW-0812">Transmembrane</keyword>
<keyword id="KW-1133">Transmembrane helix</keyword>
<keyword id="KW-0813">Transport</keyword>
<accession>A4QJZ7</accession>
<reference key="1">
    <citation type="submission" date="2007-03" db="EMBL/GenBank/DDBJ databases">
        <title>Sequence analysis of Arabidopsis pumila JS2 chloroplast DNA.</title>
        <authorList>
            <person name="Hosouchi T."/>
            <person name="Tsuruoka H."/>
            <person name="Kotani H."/>
        </authorList>
    </citation>
    <scope>NUCLEOTIDE SEQUENCE [LARGE SCALE GENOMIC DNA]</scope>
</reference>
<sequence>MQTRNTLSWIREEITRSISVSLMIYIITWASISSAYPIFAQQNYENPREATGRIVCANCHLANKPVDIEVPQTVLPDTVFEAVVKIPYDMQLKQVLANGKKGALNVGAVLILPEGFELAPPDRISPEIKEKIGTLSFQNYRPNKKNILVIGPVPGQKYSEITFPILAPDPATNKDVHFLKYPIYVGGNRGRGQIYPDGSKSNNTVYNATTGGIISKILRKEKGGYEITIVDASNGREVIDIIPRGLELLVSEGESIKLDQPLTSNPNVGGFGQGDAEIVLQDPLRVQGLLFFLGSVVLAQIFLVLKKKQFEKVQLSEMNF</sequence>
<geneLocation type="chloroplast"/>
<protein>
    <recommendedName>
        <fullName evidence="2">Cytochrome f</fullName>
    </recommendedName>
</protein>